<feature type="chain" id="PRO_0000194275" description="Methylmalonyl-CoA mutase large subunit">
    <location>
        <begin position="1"/>
        <end position="733"/>
    </location>
</feature>
<feature type="domain" description="B12-binding" evidence="2">
    <location>
        <begin position="600"/>
        <end position="732"/>
    </location>
</feature>
<feature type="region of interest" description="Disordered" evidence="3">
    <location>
        <begin position="1"/>
        <end position="22"/>
    </location>
</feature>
<feature type="compositionally biased region" description="Acidic residues" evidence="3">
    <location>
        <begin position="1"/>
        <end position="10"/>
    </location>
</feature>
<feature type="binding site" evidence="1">
    <location>
        <position position="78"/>
    </location>
    <ligand>
        <name>(R)-methylmalonyl-CoA</name>
        <dbReference type="ChEBI" id="CHEBI:57326"/>
    </ligand>
</feature>
<feature type="binding site" evidence="1">
    <location>
        <position position="81"/>
    </location>
    <ligand>
        <name>(R)-methylmalonyl-CoA</name>
        <dbReference type="ChEBI" id="CHEBI:57326"/>
    </ligand>
</feature>
<feature type="binding site" evidence="1">
    <location>
        <position position="88"/>
    </location>
    <ligand>
        <name>(R)-methylmalonyl-CoA</name>
        <dbReference type="ChEBI" id="CHEBI:57326"/>
    </ligand>
</feature>
<feature type="binding site" evidence="1">
    <location>
        <position position="90"/>
    </location>
    <ligand>
        <name>(R)-methylmalonyl-CoA</name>
        <dbReference type="ChEBI" id="CHEBI:57326"/>
    </ligand>
</feature>
<feature type="binding site" evidence="1">
    <location>
        <position position="92"/>
    </location>
    <ligand>
        <name>(R)-methylmalonyl-CoA</name>
        <dbReference type="ChEBI" id="CHEBI:57326"/>
    </ligand>
</feature>
<feature type="binding site" evidence="1">
    <location>
        <position position="117"/>
    </location>
    <ligand>
        <name>(R)-methylmalonyl-CoA</name>
        <dbReference type="ChEBI" id="CHEBI:57326"/>
    </ligand>
</feature>
<feature type="binding site" evidence="1">
    <location>
        <position position="120"/>
    </location>
    <ligand>
        <name>cob(II)alamin</name>
        <dbReference type="ChEBI" id="CHEBI:16304"/>
    </ligand>
</feature>
<feature type="binding site" evidence="1">
    <location>
        <position position="142"/>
    </location>
    <ligand>
        <name>cob(II)alamin</name>
        <dbReference type="ChEBI" id="CHEBI:16304"/>
    </ligand>
</feature>
<feature type="binding site" evidence="1">
    <location>
        <position position="198"/>
    </location>
    <ligand>
        <name>(R)-methylmalonyl-CoA</name>
        <dbReference type="ChEBI" id="CHEBI:57326"/>
    </ligand>
</feature>
<feature type="binding site" evidence="1">
    <location>
        <position position="200"/>
    </location>
    <ligand>
        <name>(R)-methylmalonyl-CoA</name>
        <dbReference type="ChEBI" id="CHEBI:57326"/>
    </ligand>
</feature>
<feature type="binding site" evidence="1">
    <location>
        <position position="209"/>
    </location>
    <ligand>
        <name>cob(II)alamin</name>
        <dbReference type="ChEBI" id="CHEBI:16304"/>
    </ligand>
</feature>
<feature type="binding site" evidence="1">
    <location>
        <position position="210"/>
    </location>
    <ligand>
        <name>(R)-methylmalonyl-CoA</name>
        <dbReference type="ChEBI" id="CHEBI:57326"/>
    </ligand>
</feature>
<feature type="binding site" evidence="1">
    <location>
        <position position="210"/>
    </location>
    <ligand>
        <name>cob(II)alamin</name>
        <dbReference type="ChEBI" id="CHEBI:16304"/>
    </ligand>
</feature>
<feature type="binding site" evidence="1">
    <location>
        <position position="247"/>
    </location>
    <ligand>
        <name>(R)-methylmalonyl-CoA</name>
        <dbReference type="ChEBI" id="CHEBI:57326"/>
    </ligand>
</feature>
<feature type="binding site" evidence="1">
    <location>
        <position position="286"/>
    </location>
    <ligand>
        <name>(R)-methylmalonyl-CoA</name>
        <dbReference type="ChEBI" id="CHEBI:57326"/>
    </ligand>
</feature>
<feature type="binding site" evidence="1">
    <location>
        <position position="288"/>
    </location>
    <ligand>
        <name>(R)-methylmalonyl-CoA</name>
        <dbReference type="ChEBI" id="CHEBI:57326"/>
    </ligand>
</feature>
<feature type="binding site" evidence="1">
    <location>
        <position position="336"/>
    </location>
    <ligand>
        <name>cob(II)alamin</name>
        <dbReference type="ChEBI" id="CHEBI:16304"/>
    </ligand>
</feature>
<feature type="binding site" evidence="1">
    <location>
        <position position="373"/>
    </location>
    <ligand>
        <name>cob(II)alamin</name>
        <dbReference type="ChEBI" id="CHEBI:16304"/>
    </ligand>
</feature>
<feature type="binding site" evidence="1">
    <location>
        <position position="376"/>
    </location>
    <ligand>
        <name>cob(II)alamin</name>
        <dbReference type="ChEBI" id="CHEBI:16304"/>
    </ligand>
</feature>
<feature type="binding site" evidence="1">
    <location>
        <position position="612"/>
    </location>
    <ligand>
        <name>cob(II)alamin</name>
        <dbReference type="ChEBI" id="CHEBI:16304"/>
    </ligand>
</feature>
<feature type="binding site" description="axial binding residue" evidence="1">
    <location>
        <position position="613"/>
    </location>
    <ligand>
        <name>cob(II)alamin</name>
        <dbReference type="ChEBI" id="CHEBI:16304"/>
    </ligand>
    <ligandPart>
        <name>Co</name>
        <dbReference type="ChEBI" id="CHEBI:27638"/>
    </ligandPart>
</feature>
<feature type="binding site" evidence="1">
    <location>
        <position position="614"/>
    </location>
    <ligand>
        <name>cob(II)alamin</name>
        <dbReference type="ChEBI" id="CHEBI:16304"/>
    </ligand>
</feature>
<feature type="binding site" evidence="1">
    <location>
        <position position="615"/>
    </location>
    <ligand>
        <name>cob(II)alamin</name>
        <dbReference type="ChEBI" id="CHEBI:16304"/>
    </ligand>
</feature>
<feature type="binding site" evidence="1">
    <location>
        <position position="658"/>
    </location>
    <ligand>
        <name>cob(II)alamin</name>
        <dbReference type="ChEBI" id="CHEBI:16304"/>
    </ligand>
</feature>
<feature type="binding site" evidence="1">
    <location>
        <position position="660"/>
    </location>
    <ligand>
        <name>cob(II)alamin</name>
        <dbReference type="ChEBI" id="CHEBI:16304"/>
    </ligand>
</feature>
<feature type="binding site" evidence="1">
    <location>
        <position position="689"/>
    </location>
    <ligand>
        <name>cob(II)alamin</name>
        <dbReference type="ChEBI" id="CHEBI:16304"/>
    </ligand>
</feature>
<feature type="binding site" evidence="1">
    <location>
        <position position="712"/>
    </location>
    <ligand>
        <name>cob(II)alamin</name>
        <dbReference type="ChEBI" id="CHEBI:16304"/>
    </ligand>
</feature>
<feature type="site" description="Transition state stabilizer" evidence="1">
    <location>
        <position position="92"/>
    </location>
</feature>
<dbReference type="EC" id="5.4.99.2"/>
<dbReference type="EMBL" id="L10064">
    <property type="protein sequence ID" value="AAA03041.1"/>
    <property type="molecule type" value="Unassigned_DNA"/>
</dbReference>
<dbReference type="PIR" id="B40595">
    <property type="entry name" value="B40595"/>
</dbReference>
<dbReference type="SMR" id="Q05065"/>
<dbReference type="GO" id="GO:0005737">
    <property type="term" value="C:cytoplasm"/>
    <property type="evidence" value="ECO:0007669"/>
    <property type="project" value="TreeGrafter"/>
</dbReference>
<dbReference type="GO" id="GO:0031419">
    <property type="term" value="F:cobalamin binding"/>
    <property type="evidence" value="ECO:0007669"/>
    <property type="project" value="UniProtKB-KW"/>
</dbReference>
<dbReference type="GO" id="GO:0046872">
    <property type="term" value="F:metal ion binding"/>
    <property type="evidence" value="ECO:0007669"/>
    <property type="project" value="UniProtKB-KW"/>
</dbReference>
<dbReference type="GO" id="GO:0004494">
    <property type="term" value="F:methylmalonyl-CoA mutase activity"/>
    <property type="evidence" value="ECO:0007669"/>
    <property type="project" value="UniProtKB-EC"/>
</dbReference>
<dbReference type="GO" id="GO:0019678">
    <property type="term" value="P:propionate metabolic process, methylmalonyl pathway"/>
    <property type="evidence" value="ECO:0007669"/>
    <property type="project" value="TreeGrafter"/>
</dbReference>
<dbReference type="CDD" id="cd02071">
    <property type="entry name" value="MM_CoA_mut_B12_BD"/>
    <property type="match status" value="1"/>
</dbReference>
<dbReference type="CDD" id="cd03679">
    <property type="entry name" value="MM_CoA_mutase_alpha_like"/>
    <property type="match status" value="1"/>
</dbReference>
<dbReference type="FunFam" id="3.40.50.280:FF:000002">
    <property type="entry name" value="Methylmalonyl-CoA mutase, mitochondrial"/>
    <property type="match status" value="1"/>
</dbReference>
<dbReference type="FunFam" id="3.20.20.240:FF:000001">
    <property type="entry name" value="Probable methylmalonyl-coa mutase"/>
    <property type="match status" value="1"/>
</dbReference>
<dbReference type="Gene3D" id="3.40.50.280">
    <property type="entry name" value="Cobalamin-binding domain"/>
    <property type="match status" value="1"/>
</dbReference>
<dbReference type="Gene3D" id="3.20.20.240">
    <property type="entry name" value="Methylmalonyl-CoA mutase"/>
    <property type="match status" value="1"/>
</dbReference>
<dbReference type="InterPro" id="IPR006159">
    <property type="entry name" value="Acid_CoA_mut_C"/>
</dbReference>
<dbReference type="InterPro" id="IPR016176">
    <property type="entry name" value="Cbl-dep_enz_cat"/>
</dbReference>
<dbReference type="InterPro" id="IPR006158">
    <property type="entry name" value="Cobalamin-bd"/>
</dbReference>
<dbReference type="InterPro" id="IPR036724">
    <property type="entry name" value="Cobalamin-bd_sf"/>
</dbReference>
<dbReference type="InterPro" id="IPR006099">
    <property type="entry name" value="MeMalonylCoA_mutase_a/b_cat"/>
</dbReference>
<dbReference type="InterPro" id="IPR006098">
    <property type="entry name" value="MMCoA_mutase_a_cat"/>
</dbReference>
<dbReference type="NCBIfam" id="TIGR00640">
    <property type="entry name" value="acid_CoA_mut_C"/>
    <property type="match status" value="1"/>
</dbReference>
<dbReference type="NCBIfam" id="TIGR00641">
    <property type="entry name" value="acid_CoA_mut_N"/>
    <property type="match status" value="1"/>
</dbReference>
<dbReference type="NCBIfam" id="NF006944">
    <property type="entry name" value="PRK09426.1"/>
    <property type="match status" value="1"/>
</dbReference>
<dbReference type="PANTHER" id="PTHR48101:SF4">
    <property type="entry name" value="METHYLMALONYL-COA MUTASE, MITOCHONDRIAL"/>
    <property type="match status" value="1"/>
</dbReference>
<dbReference type="PANTHER" id="PTHR48101">
    <property type="entry name" value="METHYLMALONYL-COA MUTASE, MITOCHONDRIAL-RELATED"/>
    <property type="match status" value="1"/>
</dbReference>
<dbReference type="Pfam" id="PF02310">
    <property type="entry name" value="B12-binding"/>
    <property type="match status" value="1"/>
</dbReference>
<dbReference type="Pfam" id="PF01642">
    <property type="entry name" value="MM_CoA_mutase"/>
    <property type="match status" value="1"/>
</dbReference>
<dbReference type="SUPFAM" id="SSF52242">
    <property type="entry name" value="Cobalamin (vitamin B12)-binding domain"/>
    <property type="match status" value="1"/>
</dbReference>
<dbReference type="SUPFAM" id="SSF51703">
    <property type="entry name" value="Cobalamin (vitamin B12)-dependent enzymes"/>
    <property type="match status" value="1"/>
</dbReference>
<dbReference type="PROSITE" id="PS51332">
    <property type="entry name" value="B12_BINDING"/>
    <property type="match status" value="1"/>
</dbReference>
<dbReference type="PROSITE" id="PS00544">
    <property type="entry name" value="METMALONYL_COA_MUTASE"/>
    <property type="match status" value="1"/>
</dbReference>
<organism>
    <name type="scientific">Streptomyces virginiae</name>
    <name type="common">Streptomyces cinnamonensis</name>
    <dbReference type="NCBI Taxonomy" id="1961"/>
    <lineage>
        <taxon>Bacteria</taxon>
        <taxon>Bacillati</taxon>
        <taxon>Actinomycetota</taxon>
        <taxon>Actinomycetes</taxon>
        <taxon>Kitasatosporales</taxon>
        <taxon>Streptomycetaceae</taxon>
        <taxon>Streptomyces</taxon>
    </lineage>
</organism>
<proteinExistence type="inferred from homology"/>
<gene>
    <name type="primary">mutB</name>
</gene>
<protein>
    <recommendedName>
        <fullName>Methylmalonyl-CoA mutase large subunit</fullName>
        <ecNumber>5.4.99.2</ecNumber>
    </recommendedName>
    <alternativeName>
        <fullName>MCM-alpha</fullName>
    </alternativeName>
</protein>
<reference key="1">
    <citation type="journal article" date="1993" name="J. Bacteriol.">
        <title>Cloning, sequencing, and expression of the gene encoding methylmalonyl-coenzyme A mutase from Streptomyces cinnamonensis.</title>
        <authorList>
            <person name="Birch A."/>
            <person name="Leiser A."/>
            <person name="Robinson J.A."/>
        </authorList>
    </citation>
    <scope>NUCLEOTIDE SEQUENCE [GENOMIC DNA]</scope>
    <source>
        <strain>A3823.5</strain>
    </source>
</reference>
<evidence type="ECO:0000250" key="1">
    <source>
        <dbReference type="UniProtKB" id="P11653"/>
    </source>
</evidence>
<evidence type="ECO:0000255" key="2">
    <source>
        <dbReference type="PROSITE-ProRule" id="PRU00666"/>
    </source>
</evidence>
<evidence type="ECO:0000256" key="3">
    <source>
        <dbReference type="SAM" id="MobiDB-lite"/>
    </source>
</evidence>
<evidence type="ECO:0000305" key="4"/>
<keyword id="KW-0846">Cobalamin</keyword>
<keyword id="KW-0170">Cobalt</keyword>
<keyword id="KW-0413">Isomerase</keyword>
<keyword id="KW-0479">Metal-binding</keyword>
<accession>Q05065</accession>
<name>MUTB_STRVG</name>
<sequence>MRIPEFDDIELGAGGGPSGSAEQWRAAVKESVGKSESDLLWETPEGIAVKPLYTGADVEGLDFLETYPGVAPYLRGPYPTMYVNQPWTIRQYAGFSTAEESNAFYRRNLAAGQKGLSVAFDLPTHRGYDSDHPRVTGDVGMAGVAIDSIYDMRQLFDGIPLDKMTVSMTMNGAVLPVLALYIVAAEEQGVPPEKLAGTIQNDILKEFMVRNTYIYPPKPSMRIISDIFAYTSQKMPRYNSISISGYHIQEAGATADLELAYTLADGVEYLRAGQEAGLDVDAFAPRLSFFWAIGMNFFMEVAKLRAARLLWAKLVKQFDPKNAKSLSLRTHSQTSGWSLTAQDVFNNVTRTCVEAMAATQGHTQSLHTNALDEALALPTDFSARIARNTQLLIQQESGTTRTIDPWGGSAYVEKLTYDLARRAWQHIEEVEAAGGMAQAIDAGIPKLRVEEAAARTQARIDSGRQPVIGVNKYRVDTDEQIDVLKVDNSSVRAQQIEKLRRLREERDDAACQDALRALTAAAERGPGQGLEGNLLALAVDAARAKATVGEISDALESVYGRHAGQIRTISGVYRTEAGQSPSVERTRALVDAFDEAEGRRPRILVAKMGQDGHDRGQKVIASAFADLGFDVDVGPLFQTPAEVARQAVEADVHIVGVSSLAAGHLTLVPALREELAAEGRDDIMIVVGGVIPPQDVEALHEAGATAVFPPGTVIPDAAHDLVKRLAADLGHEL</sequence>
<comment type="function">
    <text>Catalyzes the isomerization of succinyl-CoA to methylmalonyl-CoA during synthesis of propionate from tricarboxylic acid-cycle intermediates. This conversion most likely represents an important source of building blocks for polyketide antibiotic biosynthesis. It is unable to catalyze the conversion of isobutyryl-CoA into N-butyryl-CoA.</text>
</comment>
<comment type="catalytic activity">
    <reaction>
        <text>(R)-methylmalonyl-CoA = succinyl-CoA</text>
        <dbReference type="Rhea" id="RHEA:22888"/>
        <dbReference type="ChEBI" id="CHEBI:57292"/>
        <dbReference type="ChEBI" id="CHEBI:57326"/>
        <dbReference type="EC" id="5.4.99.2"/>
    </reaction>
</comment>
<comment type="cofactor">
    <cofactor>
        <name>adenosylcob(III)alamin</name>
        <dbReference type="ChEBI" id="CHEBI:18408"/>
    </cofactor>
</comment>
<comment type="subunit">
    <text>Heterodimer of an alpha and a beta chain.</text>
</comment>
<comment type="similarity">
    <text evidence="4">Belongs to the methylmalonyl-CoA mutase family.</text>
</comment>